<organism>
    <name type="scientific">Rattus norvegicus</name>
    <name type="common">Rat</name>
    <dbReference type="NCBI Taxonomy" id="10116"/>
    <lineage>
        <taxon>Eukaryota</taxon>
        <taxon>Metazoa</taxon>
        <taxon>Chordata</taxon>
        <taxon>Craniata</taxon>
        <taxon>Vertebrata</taxon>
        <taxon>Euteleostomi</taxon>
        <taxon>Mammalia</taxon>
        <taxon>Eutheria</taxon>
        <taxon>Euarchontoglires</taxon>
        <taxon>Glires</taxon>
        <taxon>Rodentia</taxon>
        <taxon>Myomorpha</taxon>
        <taxon>Muroidea</taxon>
        <taxon>Muridae</taxon>
        <taxon>Murinae</taxon>
        <taxon>Rattus</taxon>
    </lineage>
</organism>
<dbReference type="EC" id="5.3.3.8"/>
<dbReference type="EMBL" id="BC083764">
    <property type="protein sequence ID" value="AAH83764.1"/>
    <property type="molecule type" value="mRNA"/>
</dbReference>
<dbReference type="RefSeq" id="NP_001006967.1">
    <molecule id="Q5XIC0-1"/>
    <property type="nucleotide sequence ID" value="NM_001006966.1"/>
</dbReference>
<dbReference type="SMR" id="Q5XIC0"/>
<dbReference type="FunCoup" id="Q5XIC0">
    <property type="interactions" value="1632"/>
</dbReference>
<dbReference type="IntAct" id="Q5XIC0">
    <property type="interactions" value="1"/>
</dbReference>
<dbReference type="STRING" id="10116.ENSRNOP00000022022"/>
<dbReference type="SwissLipids" id="SLP:000001588"/>
<dbReference type="GlyGen" id="Q5XIC0">
    <property type="glycosylation" value="1 site, 1 O-linked glycan (1 site)"/>
</dbReference>
<dbReference type="iPTMnet" id="Q5XIC0"/>
<dbReference type="PhosphoSitePlus" id="Q5XIC0"/>
<dbReference type="SwissPalm" id="Q5XIC0"/>
<dbReference type="jPOST" id="Q5XIC0"/>
<dbReference type="PaxDb" id="10116-ENSRNOP00000022022"/>
<dbReference type="GeneID" id="291075"/>
<dbReference type="KEGG" id="rno:291075"/>
<dbReference type="UCSC" id="RGD:1359427">
    <molecule id="Q5XIC0-1"/>
    <property type="organism name" value="rat"/>
</dbReference>
<dbReference type="AGR" id="RGD:1359427"/>
<dbReference type="CTD" id="10455"/>
<dbReference type="RGD" id="1359427">
    <property type="gene designation" value="Eci2"/>
</dbReference>
<dbReference type="VEuPathDB" id="HostDB:ENSRNOG00000066714"/>
<dbReference type="eggNOG" id="KOG0016">
    <property type="taxonomic scope" value="Eukaryota"/>
</dbReference>
<dbReference type="eggNOG" id="KOG0817">
    <property type="taxonomic scope" value="Eukaryota"/>
</dbReference>
<dbReference type="HOGENOM" id="CLU_009834_7_2_1"/>
<dbReference type="InParanoid" id="Q5XIC0"/>
<dbReference type="OrthoDB" id="409763at2759"/>
<dbReference type="PhylomeDB" id="Q5XIC0"/>
<dbReference type="TreeFam" id="TF313375"/>
<dbReference type="Reactome" id="R-RNO-390247">
    <property type="pathway name" value="Beta-oxidation of very long chain fatty acids"/>
</dbReference>
<dbReference type="Reactome" id="R-RNO-9033241">
    <property type="pathway name" value="Peroxisomal protein import"/>
</dbReference>
<dbReference type="SABIO-RK" id="Q5XIC0"/>
<dbReference type="UniPathway" id="UPA00659"/>
<dbReference type="PRO" id="PR:Q5XIC0"/>
<dbReference type="Proteomes" id="UP000002494">
    <property type="component" value="Chromosome 17"/>
</dbReference>
<dbReference type="Bgee" id="ENSRNOG00000029549">
    <property type="expression patterns" value="Expressed in adult mammalian kidney and 19 other cell types or tissues"/>
</dbReference>
<dbReference type="ExpressionAtlas" id="Q5XIC0">
    <property type="expression patterns" value="baseline and differential"/>
</dbReference>
<dbReference type="GO" id="GO:0005739">
    <property type="term" value="C:mitochondrion"/>
    <property type="evidence" value="ECO:0000266"/>
    <property type="project" value="RGD"/>
</dbReference>
<dbReference type="GO" id="GO:0005782">
    <property type="term" value="C:peroxisomal matrix"/>
    <property type="evidence" value="ECO:0007669"/>
    <property type="project" value="UniProtKB-SubCell"/>
</dbReference>
<dbReference type="GO" id="GO:0005777">
    <property type="term" value="C:peroxisome"/>
    <property type="evidence" value="ECO:0000314"/>
    <property type="project" value="RGD"/>
</dbReference>
<dbReference type="GO" id="GO:0004165">
    <property type="term" value="F:delta(3)-delta(2)-enoyl-CoA isomerase activity"/>
    <property type="evidence" value="ECO:0000314"/>
    <property type="project" value="UniProtKB"/>
</dbReference>
<dbReference type="GO" id="GO:0000062">
    <property type="term" value="F:fatty-acyl-CoA binding"/>
    <property type="evidence" value="ECO:0007669"/>
    <property type="project" value="InterPro"/>
</dbReference>
<dbReference type="GO" id="GO:0016863">
    <property type="term" value="F:intramolecular oxidoreductase activity, transposing C=C bonds"/>
    <property type="evidence" value="ECO:0000314"/>
    <property type="project" value="RGD"/>
</dbReference>
<dbReference type="GO" id="GO:0006635">
    <property type="term" value="P:fatty acid beta-oxidation"/>
    <property type="evidence" value="ECO:0000314"/>
    <property type="project" value="RGD"/>
</dbReference>
<dbReference type="CDD" id="cd06558">
    <property type="entry name" value="crotonase-like"/>
    <property type="match status" value="1"/>
</dbReference>
<dbReference type="FunFam" id="1.10.12.10:FF:000013">
    <property type="entry name" value="Enoyl-CoA delta isomerase 2, mitochondrial"/>
    <property type="match status" value="1"/>
</dbReference>
<dbReference type="FunFam" id="1.20.80.10:FF:000026">
    <property type="entry name" value="Enoyl-CoA delta isomerase 2, mitochondrial"/>
    <property type="match status" value="1"/>
</dbReference>
<dbReference type="FunFam" id="3.90.226.10:FF:000084">
    <property type="entry name" value="Enoyl-CoA delta isomerase 2, mitochondrial"/>
    <property type="match status" value="1"/>
</dbReference>
<dbReference type="Gene3D" id="1.20.80.10">
    <property type="match status" value="1"/>
</dbReference>
<dbReference type="Gene3D" id="3.90.226.10">
    <property type="entry name" value="2-enoyl-CoA Hydratase, Chain A, domain 1"/>
    <property type="match status" value="1"/>
</dbReference>
<dbReference type="Gene3D" id="1.10.12.10">
    <property type="entry name" value="Lyase 2-enoyl-coa Hydratase, Chain A, domain 2"/>
    <property type="match status" value="1"/>
</dbReference>
<dbReference type="InterPro" id="IPR022408">
    <property type="entry name" value="Acyl-CoA-binding_prot_CS"/>
</dbReference>
<dbReference type="InterPro" id="IPR000582">
    <property type="entry name" value="Acyl-CoA-binding_protein"/>
</dbReference>
<dbReference type="InterPro" id="IPR035984">
    <property type="entry name" value="Acyl-CoA-binding_sf"/>
</dbReference>
<dbReference type="InterPro" id="IPR029045">
    <property type="entry name" value="ClpP/crotonase-like_dom_sf"/>
</dbReference>
<dbReference type="InterPro" id="IPR051053">
    <property type="entry name" value="ECH/Chromodomain_protein"/>
</dbReference>
<dbReference type="InterPro" id="IPR001753">
    <property type="entry name" value="Enoyl-CoA_hydra/iso"/>
</dbReference>
<dbReference type="InterPro" id="IPR014748">
    <property type="entry name" value="Enoyl-CoA_hydra_C"/>
</dbReference>
<dbReference type="InterPro" id="IPR014352">
    <property type="entry name" value="FERM/acyl-CoA-bd_prot_sf"/>
</dbReference>
<dbReference type="PANTHER" id="PTHR43684">
    <property type="match status" value="1"/>
</dbReference>
<dbReference type="PANTHER" id="PTHR43684:SF1">
    <property type="entry name" value="ENOYL-COA DELTA ISOMERASE 2"/>
    <property type="match status" value="1"/>
</dbReference>
<dbReference type="Pfam" id="PF00887">
    <property type="entry name" value="ACBP"/>
    <property type="match status" value="1"/>
</dbReference>
<dbReference type="Pfam" id="PF00378">
    <property type="entry name" value="ECH_1"/>
    <property type="match status" value="1"/>
</dbReference>
<dbReference type="PRINTS" id="PR00689">
    <property type="entry name" value="ACOABINDINGP"/>
</dbReference>
<dbReference type="SUPFAM" id="SSF47027">
    <property type="entry name" value="Acyl-CoA binding protein"/>
    <property type="match status" value="1"/>
</dbReference>
<dbReference type="SUPFAM" id="SSF52096">
    <property type="entry name" value="ClpP/crotonase"/>
    <property type="match status" value="1"/>
</dbReference>
<dbReference type="PROSITE" id="PS00880">
    <property type="entry name" value="ACB_1"/>
    <property type="match status" value="1"/>
</dbReference>
<dbReference type="PROSITE" id="PS51228">
    <property type="entry name" value="ACB_2"/>
    <property type="match status" value="1"/>
</dbReference>
<comment type="function">
    <text evidence="7">Able to isomerize both 3-cis and 3-trans double bonds into the 2-trans form in a range of enoyl-CoA species. Has a preference for 3-trans substrates.</text>
</comment>
<comment type="catalytic activity">
    <reaction evidence="10">
        <text>a (3Z)-enoyl-CoA = a 4-saturated (2E)-enoyl-CoA</text>
        <dbReference type="Rhea" id="RHEA:45900"/>
        <dbReference type="ChEBI" id="CHEBI:85097"/>
        <dbReference type="ChEBI" id="CHEBI:85489"/>
        <dbReference type="EC" id="5.3.3.8"/>
    </reaction>
    <physiologicalReaction direction="left-to-right" evidence="10">
        <dbReference type="Rhea" id="RHEA:45901"/>
    </physiologicalReaction>
</comment>
<comment type="catalytic activity">
    <reaction evidence="10">
        <text>a (3E)-enoyl-CoA = a 4-saturated (2E)-enoyl-CoA</text>
        <dbReference type="Rhea" id="RHEA:45228"/>
        <dbReference type="ChEBI" id="CHEBI:58521"/>
        <dbReference type="ChEBI" id="CHEBI:85097"/>
        <dbReference type="EC" id="5.3.3.8"/>
    </reaction>
    <physiologicalReaction direction="left-to-right" evidence="10">
        <dbReference type="Rhea" id="RHEA:45229"/>
    </physiologicalReaction>
</comment>
<comment type="catalytic activity">
    <reaction evidence="7">
        <text>(2E)-tetradecenoyl-CoA = (3Z)-tetradecenoyl-CoA</text>
        <dbReference type="Rhea" id="RHEA:29847"/>
        <dbReference type="ChEBI" id="CHEBI:61405"/>
        <dbReference type="ChEBI" id="CHEBI:61968"/>
    </reaction>
    <physiologicalReaction direction="right-to-left" evidence="7">
        <dbReference type="Rhea" id="RHEA:29849"/>
    </physiologicalReaction>
</comment>
<comment type="catalytic activity">
    <reaction evidence="7">
        <text>(3E)-tetradecenoyl-CoA = (2E)-tetradecenoyl-CoA</text>
        <dbReference type="Rhea" id="RHEA:47476"/>
        <dbReference type="ChEBI" id="CHEBI:61405"/>
        <dbReference type="ChEBI" id="CHEBI:87710"/>
    </reaction>
    <physiologicalReaction direction="left-to-right" evidence="7">
        <dbReference type="Rhea" id="RHEA:47477"/>
    </physiologicalReaction>
</comment>
<comment type="catalytic activity">
    <reaction evidence="7">
        <text>(3E)-octenoyl-CoA = (2E)-octenoyl-CoA</text>
        <dbReference type="Rhea" id="RHEA:49852"/>
        <dbReference type="ChEBI" id="CHEBI:62242"/>
        <dbReference type="ChEBI" id="CHEBI:131962"/>
    </reaction>
    <physiologicalReaction direction="left-to-right" evidence="7">
        <dbReference type="Rhea" id="RHEA:49853"/>
    </physiologicalReaction>
</comment>
<comment type="catalytic activity">
    <reaction evidence="2">
        <text>(3Z)-octenoyl-CoA = (2E)-octenoyl-CoA</text>
        <dbReference type="Rhea" id="RHEA:46044"/>
        <dbReference type="ChEBI" id="CHEBI:62242"/>
        <dbReference type="ChEBI" id="CHEBI:85640"/>
    </reaction>
    <physiologicalReaction direction="left-to-right" evidence="2">
        <dbReference type="Rhea" id="RHEA:46045"/>
    </physiologicalReaction>
</comment>
<comment type="catalytic activity">
    <reaction evidence="4">
        <text>(3E)-nonenoyl-CoA = (2E)-nonenoyl-CoA</text>
        <dbReference type="Rhea" id="RHEA:46068"/>
        <dbReference type="ChEBI" id="CHEBI:76292"/>
        <dbReference type="ChEBI" id="CHEBI:85655"/>
    </reaction>
    <physiologicalReaction direction="left-to-right" evidence="4">
        <dbReference type="Rhea" id="RHEA:46069"/>
    </physiologicalReaction>
</comment>
<comment type="biophysicochemical properties">
    <kinetics>
        <KM evidence="7">1600 uM for (3Z)-hexenoyl-CoA</KM>
        <KM evidence="7">120 uM for (3Z)-octenoyl-CoA</KM>
        <KM evidence="7">29 uM for (3Z)-tetradecenoyl-CoA</KM>
        <KM evidence="7">1200 uM for (3E)-hexenoyl-CoA</KM>
        <KM evidence="7">100 uM for (3E)-octenoyl-CoA</KM>
        <KM evidence="7">21 uM for (3E)-tetradecenoyl-CoA</KM>
        <text evidence="7">kcat are 100 sec(-1), 210 sec(-1), 540 sec(-1), 58 sec(-1), 47 sec(-1) and 210 sec(-1) for (3Z)-hexenoyl-CoA, (3Z)-octenoyl-CoA, (3Z)-tetradecenoyl-CoA, (3E)-hexenoyl-CoA, (3E)-octenoyl-CoA and (3E)-tetradecenoyl-CoA, respectively.</text>
    </kinetics>
</comment>
<comment type="pathway">
    <text evidence="7">Lipid metabolism; fatty acid beta-oxidation.</text>
</comment>
<comment type="subcellular location">
    <subcellularLocation>
        <location evidence="7">Peroxisome matrix</location>
    </subcellularLocation>
    <subcellularLocation>
        <location evidence="7">Mitochondrion</location>
    </subcellularLocation>
</comment>
<comment type="alternative products">
    <event type="alternative splicing"/>
    <isoform>
        <id>Q5XIC0-1</id>
        <name>1</name>
        <sequence type="displayed"/>
    </isoform>
    <text>Additional isoforms may exist.</text>
</comment>
<comment type="tissue specificity">
    <text evidence="7">Liver (at protein level).</text>
</comment>
<comment type="similarity">
    <text evidence="9">In the C-terminal section; belongs to the enoyl-CoA hydratase/isomerase family.</text>
</comment>
<gene>
    <name evidence="11" type="primary">Eci2</name>
    <name type="synonym">Peci</name>
</gene>
<proteinExistence type="evidence at protein level"/>
<accession>Q5XIC0</accession>
<evidence type="ECO:0000250" key="1"/>
<evidence type="ECO:0000250" key="2">
    <source>
        <dbReference type="UniProtKB" id="O75521"/>
    </source>
</evidence>
<evidence type="ECO:0000250" key="3">
    <source>
        <dbReference type="UniProtKB" id="Q05871"/>
    </source>
</evidence>
<evidence type="ECO:0000250" key="4">
    <source>
        <dbReference type="UniProtKB" id="Q9WUR2"/>
    </source>
</evidence>
<evidence type="ECO:0000255" key="5"/>
<evidence type="ECO:0000255" key="6">
    <source>
        <dbReference type="PROSITE-ProRule" id="PRU00573"/>
    </source>
</evidence>
<evidence type="ECO:0000269" key="7">
    <source>
    </source>
</evidence>
<evidence type="ECO:0000303" key="8">
    <source>
    </source>
</evidence>
<evidence type="ECO:0000305" key="9"/>
<evidence type="ECO:0000305" key="10">
    <source>
    </source>
</evidence>
<evidence type="ECO:0000312" key="11">
    <source>
        <dbReference type="RGD" id="1359427"/>
    </source>
</evidence>
<sequence length="391" mass="43021">MAAVTWSRARCWCPSLLQVLRLPVTKLHLGRPAMRATQQDFENAMNQVKLLKKDPGNEVKLRLYALYKQATEGPCTMPKPGVFDFVNKAKWDAWNALGSLPKETARQNYVDLVSSLSSSSEASSQGKGGADGKAQESKGILVTSEGGITKITFNRPSKKNAITFQMYQDIILALKNASTDDTVITVFTGAGDYYSSGNDLTNFTSASGGMEEAANKGAIVLREFVNTFIDFPKPLVAVVNGPAVGISVTLLGLFDAVYASDRATFHTPFSHLGQSPEACSSYTFPKMMGSAKAAEMLLFGKKLTAREAWAQGLVTEVFPESTFETEVWTRLKTYAKLPPNSMRISKELIRKNEKEKLHAVNEEECTTLRARWLSEECINAIMSFVTRKPKL</sequence>
<protein>
    <recommendedName>
        <fullName evidence="8 9">Enoyl-CoA delta isomerase 2</fullName>
        <ecNumber>5.3.3.8</ecNumber>
    </recommendedName>
    <alternativeName>
        <fullName>Delta(3),delta(2)-enoyl-CoA isomerase</fullName>
        <shortName>D3,D2-enoyl-CoA isomerase</shortName>
    </alternativeName>
    <alternativeName>
        <fullName>Dodecenoyl-CoA isomerase</fullName>
    </alternativeName>
    <alternativeName>
        <fullName evidence="8">Peroxisomal 3,2-trans-enoyl-CoA isomerase</fullName>
        <shortName evidence="8">pECI</shortName>
    </alternativeName>
</protein>
<reference key="1">
    <citation type="journal article" date="2004" name="Genome Res.">
        <title>The status, quality, and expansion of the NIH full-length cDNA project: the Mammalian Gene Collection (MGC).</title>
        <authorList>
            <consortium name="The MGC Project Team"/>
        </authorList>
    </citation>
    <scope>NUCLEOTIDE SEQUENCE [LARGE SCALE MRNA]</scope>
    <source>
        <tissue>Heart</tissue>
    </source>
</reference>
<reference key="2">
    <citation type="journal article" date="2002" name="J. Biol. Chem.">
        <title>Functional characterization of delta3,delta2-enoyl-CoA isomerases from rat liver.</title>
        <authorList>
            <person name="Zhang D."/>
            <person name="Yu W."/>
            <person name="Geisbrecht B.V."/>
            <person name="Gould S.J."/>
            <person name="Sprecher H."/>
            <person name="Schulz H."/>
        </authorList>
    </citation>
    <scope>FUNCTION</scope>
    <scope>SUBCELLULAR LOCATION</scope>
    <scope>TISSUE SPECIFICITY</scope>
</reference>
<feature type="transit peptide" description="Mitochondrion" evidence="5">
    <location>
        <begin position="1"/>
        <end position="36"/>
    </location>
</feature>
<feature type="chain" id="PRO_0000381943" description="Enoyl-CoA delta isomerase 2">
    <location>
        <begin position="37"/>
        <end position="391"/>
    </location>
</feature>
<feature type="domain" description="ACB" evidence="6">
    <location>
        <begin position="37"/>
        <end position="122"/>
    </location>
</feature>
<feature type="region of interest" description="ECH-like">
    <location>
        <begin position="149"/>
        <end position="319"/>
    </location>
</feature>
<feature type="short sequence motif" description="Microbody targeting signal" evidence="5">
    <location>
        <begin position="389"/>
        <end position="391"/>
    </location>
</feature>
<feature type="binding site" evidence="1">
    <location>
        <begin position="64"/>
        <end position="68"/>
    </location>
    <ligand>
        <name>an acyl-CoA</name>
        <dbReference type="ChEBI" id="CHEBI:58342"/>
    </ligand>
</feature>
<feature type="binding site" evidence="1">
    <location>
        <position position="90"/>
    </location>
    <ligand>
        <name>an acyl-CoA</name>
        <dbReference type="ChEBI" id="CHEBI:58342"/>
    </ligand>
</feature>
<feature type="binding site" evidence="1">
    <location>
        <position position="109"/>
    </location>
    <ligand>
        <name>an acyl-CoA</name>
        <dbReference type="ChEBI" id="CHEBI:58342"/>
    </ligand>
</feature>
<feature type="binding site" evidence="3">
    <location>
        <begin position="196"/>
        <end position="200"/>
    </location>
    <ligand>
        <name>substrate</name>
    </ligand>
</feature>
<feature type="site" description="Important for catalytic activity" evidence="3">
    <location>
        <position position="277"/>
    </location>
</feature>
<feature type="modified residue" description="N6-acetyllysine; alternate" evidence="2">
    <location>
        <position position="49"/>
    </location>
</feature>
<feature type="modified residue" description="N6-succinyllysine; alternate" evidence="4">
    <location>
        <position position="49"/>
    </location>
</feature>
<feature type="modified residue" description="N6-succinyllysine" evidence="4">
    <location>
        <position position="53"/>
    </location>
</feature>
<feature type="modified residue" description="N6-acetyllysine; alternate" evidence="4">
    <location>
        <position position="60"/>
    </location>
</feature>
<feature type="modified residue" description="N6-succinyllysine; alternate" evidence="4">
    <location>
        <position position="60"/>
    </location>
</feature>
<feature type="modified residue" description="N6-succinyllysine" evidence="4">
    <location>
        <position position="68"/>
    </location>
</feature>
<feature type="modified residue" description="N6-succinyllysine" evidence="4">
    <location>
        <position position="79"/>
    </location>
</feature>
<feature type="modified residue" description="N6-succinyllysine" evidence="4">
    <location>
        <position position="88"/>
    </location>
</feature>
<feature type="modified residue" description="N6-acetyllysine; alternate" evidence="2">
    <location>
        <position position="90"/>
    </location>
</feature>
<feature type="modified residue" description="N6-succinyllysine; alternate" evidence="4">
    <location>
        <position position="90"/>
    </location>
</feature>
<feature type="modified residue" description="Phosphoserine" evidence="2">
    <location>
        <position position="99"/>
    </location>
</feature>
<feature type="modified residue" description="Phosphoserine" evidence="2">
    <location>
        <position position="117"/>
    </location>
</feature>
<feature type="modified residue" description="N6-succinyllysine" evidence="4">
    <location>
        <position position="127"/>
    </location>
</feature>
<feature type="modified residue" description="N6-succinyllysine" evidence="4">
    <location>
        <position position="159"/>
    </location>
</feature>
<feature type="modified residue" description="N6-succinyllysine" evidence="4">
    <location>
        <position position="286"/>
    </location>
</feature>
<name>ECI2_RAT</name>
<keyword id="KW-0007">Acetylation</keyword>
<keyword id="KW-0025">Alternative splicing</keyword>
<keyword id="KW-0413">Isomerase</keyword>
<keyword id="KW-0496">Mitochondrion</keyword>
<keyword id="KW-0576">Peroxisome</keyword>
<keyword id="KW-0597">Phosphoprotein</keyword>
<keyword id="KW-1185">Reference proteome</keyword>
<keyword id="KW-0809">Transit peptide</keyword>